<protein>
    <recommendedName>
        <fullName>Acetyl-CoA decarbonylase/synthase complex subunit delta 1</fullName>
        <shortName>ACDS complex subunit delta 1</shortName>
    </recommendedName>
    <alternativeName>
        <fullName>Corrinoid/iron-sulfur component small subunit 1</fullName>
    </alternativeName>
</protein>
<evidence type="ECO:0000250" key="1"/>
<evidence type="ECO:0000305" key="2"/>
<organism>
    <name type="scientific">Methanosarcina acetivorans (strain ATCC 35395 / DSM 2834 / JCM 12185 / C2A)</name>
    <dbReference type="NCBI Taxonomy" id="188937"/>
    <lineage>
        <taxon>Archaea</taxon>
        <taxon>Methanobacteriati</taxon>
        <taxon>Methanobacteriota</taxon>
        <taxon>Stenosarchaea group</taxon>
        <taxon>Methanomicrobia</taxon>
        <taxon>Methanosarcinales</taxon>
        <taxon>Methanosarcinaceae</taxon>
        <taxon>Methanosarcina</taxon>
    </lineage>
</organism>
<gene>
    <name type="primary">cdhD1</name>
    <name type="ordered locus">MA_1012</name>
</gene>
<accession>Q8TRZ8</accession>
<reference key="1">
    <citation type="journal article" date="2002" name="Genome Res.">
        <title>The genome of Methanosarcina acetivorans reveals extensive metabolic and physiological diversity.</title>
        <authorList>
            <person name="Galagan J.E."/>
            <person name="Nusbaum C."/>
            <person name="Roy A."/>
            <person name="Endrizzi M.G."/>
            <person name="Macdonald P."/>
            <person name="FitzHugh W."/>
            <person name="Calvo S."/>
            <person name="Engels R."/>
            <person name="Smirnov S."/>
            <person name="Atnoor D."/>
            <person name="Brown A."/>
            <person name="Allen N."/>
            <person name="Naylor J."/>
            <person name="Stange-Thomann N."/>
            <person name="DeArellano K."/>
            <person name="Johnson R."/>
            <person name="Linton L."/>
            <person name="McEwan P."/>
            <person name="McKernan K."/>
            <person name="Talamas J."/>
            <person name="Tirrell A."/>
            <person name="Ye W."/>
            <person name="Zimmer A."/>
            <person name="Barber R.D."/>
            <person name="Cann I."/>
            <person name="Graham D.E."/>
            <person name="Grahame D.A."/>
            <person name="Guss A.M."/>
            <person name="Hedderich R."/>
            <person name="Ingram-Smith C."/>
            <person name="Kuettner H.C."/>
            <person name="Krzycki J.A."/>
            <person name="Leigh J.A."/>
            <person name="Li W."/>
            <person name="Liu J."/>
            <person name="Mukhopadhyay B."/>
            <person name="Reeve J.N."/>
            <person name="Smith K."/>
            <person name="Springer T.A."/>
            <person name="Umayam L.A."/>
            <person name="White O."/>
            <person name="White R.H."/>
            <person name="de Macario E.C."/>
            <person name="Ferry J.G."/>
            <person name="Jarrell K.F."/>
            <person name="Jing H."/>
            <person name="Macario A.J.L."/>
            <person name="Paulsen I.T."/>
            <person name="Pritchett M."/>
            <person name="Sowers K.R."/>
            <person name="Swanson R.V."/>
            <person name="Zinder S.H."/>
            <person name="Lander E."/>
            <person name="Metcalf W.W."/>
            <person name="Birren B."/>
        </authorList>
    </citation>
    <scope>NUCLEOTIDE SEQUENCE [LARGE SCALE GENOMIC DNA]</scope>
    <source>
        <strain>ATCC 35395 / DSM 2834 / JCM 12185 / C2A</strain>
    </source>
</reference>
<name>ACDD1_METAC</name>
<keyword id="KW-0484">Methanogenesis</keyword>
<keyword id="KW-1185">Reference proteome</keyword>
<proteinExistence type="inferred from homology"/>
<feature type="chain" id="PRO_0000155110" description="Acetyl-CoA decarbonylase/synthase complex subunit delta 1">
    <location>
        <begin position="1"/>
        <end position="436"/>
    </location>
</feature>
<comment type="function">
    <text evidence="1">Part of a complex that catalyzes the reversible cleavage of acetyl-CoA, allowing growth on acetate as sole source of carbon and energy. Probably maintains the overall quaternary structure of the ACDS complex (By similarity).</text>
</comment>
<comment type="pathway">
    <text>One-carbon metabolism; methanogenesis from acetate.</text>
</comment>
<comment type="subunit">
    <text evidence="2">Heterodimer of delta and gamma chains. The ACDS complex is made up of alpha, epsilon, beta, gamma and delta chains with a probable stoichiometry of (alpha(2)epsilon(2))(4)-beta(8)-(gamma(1)delta(1))(8) (Potential).</text>
</comment>
<comment type="similarity">
    <text evidence="2">Belongs to the CdhD family.</text>
</comment>
<sequence length="436" mass="47069">MAKKMKLSDITNMFAGMDVEALEGVTIEGDIEIDLGGLGGGFDPMLAAALGQESAVLAQHFARLAGMFGYPVGIGAPAAPAVSPALAAPKLKDLIPAKFDVANIAEWATEIQEVPIGNTSADGGSRGKRVMLGGEKALPFYFDAPMPNRNQVTIDVFDMRIGLAKAVKENYDEVMDSPGEWAKKNVEKFNADMITIHLISTDPLIKDTPAKEAAKTVEEVLQAVDVPIAIGGSGNPQKDPEVLARAAEVSEGERCLLASASLNLDYAAIAEAALKYDHDVLSWTQLDMNAQKELNRKLMKQCNVPRDRIIMDPTTAALGYGLDYAYTNMERIRLAALMGDDELTFPMSSGTTNAWGARESWMVSSPLKEDSDWGPREYRGPIWEIVTGLSLAIAGNDLFMMMHPTSVAVLKQITQTLFGMIDTEQVDVANWIGAEV</sequence>
<dbReference type="EMBL" id="AE010299">
    <property type="protein sequence ID" value="AAM04442.1"/>
    <property type="molecule type" value="Genomic_DNA"/>
</dbReference>
<dbReference type="RefSeq" id="WP_011021047.1">
    <property type="nucleotide sequence ID" value="NC_003552.1"/>
</dbReference>
<dbReference type="SMR" id="Q8TRZ8"/>
<dbReference type="FunCoup" id="Q8TRZ8">
    <property type="interactions" value="71"/>
</dbReference>
<dbReference type="STRING" id="188937.MA_1012"/>
<dbReference type="EnsemblBacteria" id="AAM04442">
    <property type="protein sequence ID" value="AAM04442"/>
    <property type="gene ID" value="MA_1012"/>
</dbReference>
<dbReference type="GeneID" id="1472902"/>
<dbReference type="KEGG" id="mac:MA_1012"/>
<dbReference type="HOGENOM" id="CLU_040403_0_0_2"/>
<dbReference type="InParanoid" id="Q8TRZ8"/>
<dbReference type="OrthoDB" id="67748at2157"/>
<dbReference type="PhylomeDB" id="Q8TRZ8"/>
<dbReference type="UniPathway" id="UPA00642"/>
<dbReference type="Proteomes" id="UP000002487">
    <property type="component" value="Chromosome"/>
</dbReference>
<dbReference type="GO" id="GO:0019385">
    <property type="term" value="P:methanogenesis, from acetate"/>
    <property type="evidence" value="ECO:0007669"/>
    <property type="project" value="UniProtKB-UniRule"/>
</dbReference>
<dbReference type="GO" id="GO:0006730">
    <property type="term" value="P:one-carbon metabolic process"/>
    <property type="evidence" value="ECO:0007669"/>
    <property type="project" value="InterPro"/>
</dbReference>
<dbReference type="FunFam" id="3.20.20.20:FF:000009">
    <property type="entry name" value="Acetyl-CoA decarbonylase/synthase complex subunit delta"/>
    <property type="match status" value="1"/>
</dbReference>
<dbReference type="Gene3D" id="3.20.20.20">
    <property type="entry name" value="Dihydropteroate synthase-like"/>
    <property type="match status" value="1"/>
</dbReference>
<dbReference type="HAMAP" id="MF_01135">
    <property type="entry name" value="CdhD"/>
    <property type="match status" value="1"/>
</dbReference>
<dbReference type="InterPro" id="IPR016041">
    <property type="entry name" value="Ac-CoA_synth_d_su_TIM-brl"/>
</dbReference>
<dbReference type="InterPro" id="IPR051069">
    <property type="entry name" value="ACDS_complex_subunit"/>
</dbReference>
<dbReference type="InterPro" id="IPR004486">
    <property type="entry name" value="CO_DH/Ac-CoA_synth_dsu"/>
</dbReference>
<dbReference type="InterPro" id="IPR011005">
    <property type="entry name" value="Dihydropteroate_synth-like_sf"/>
</dbReference>
<dbReference type="NCBIfam" id="TIGR00381">
    <property type="entry name" value="cdhD"/>
    <property type="match status" value="1"/>
</dbReference>
<dbReference type="NCBIfam" id="NF003375">
    <property type="entry name" value="PRK04452.1-1"/>
    <property type="match status" value="1"/>
</dbReference>
<dbReference type="NCBIfam" id="NF003376">
    <property type="entry name" value="PRK04452.1-2"/>
    <property type="match status" value="1"/>
</dbReference>
<dbReference type="PANTHER" id="PTHR36214">
    <property type="match status" value="1"/>
</dbReference>
<dbReference type="PANTHER" id="PTHR36214:SF5">
    <property type="entry name" value="ACETYL-COA DECARBONYLASE_SYNTHASE COMPLEX SUBUNIT DELTA"/>
    <property type="match status" value="1"/>
</dbReference>
<dbReference type="Pfam" id="PF03599">
    <property type="entry name" value="CdhD"/>
    <property type="match status" value="1"/>
</dbReference>
<dbReference type="SUPFAM" id="SSF51717">
    <property type="entry name" value="Dihydropteroate synthetase-like"/>
    <property type="match status" value="1"/>
</dbReference>